<organism>
    <name type="scientific">Aspergillus fumigatus (strain ATCC MYA-4609 / CBS 101355 / FGSC A1100 / Af293)</name>
    <name type="common">Neosartorya fumigata</name>
    <dbReference type="NCBI Taxonomy" id="330879"/>
    <lineage>
        <taxon>Eukaryota</taxon>
        <taxon>Fungi</taxon>
        <taxon>Dikarya</taxon>
        <taxon>Ascomycota</taxon>
        <taxon>Pezizomycotina</taxon>
        <taxon>Eurotiomycetes</taxon>
        <taxon>Eurotiomycetidae</taxon>
        <taxon>Eurotiales</taxon>
        <taxon>Aspergillaceae</taxon>
        <taxon>Aspergillus</taxon>
        <taxon>Aspergillus subgen. Fumigati</taxon>
    </lineage>
</organism>
<keyword id="KW-0539">Nucleus</keyword>
<keyword id="KW-1185">Reference proteome</keyword>
<keyword id="KW-0690">Ribosome biogenesis</keyword>
<keyword id="KW-0694">RNA-binding</keyword>
<keyword id="KW-0698">rRNA processing</keyword>
<proteinExistence type="inferred from homology"/>
<evidence type="ECO:0000250" key="1"/>
<evidence type="ECO:0000256" key="2">
    <source>
        <dbReference type="SAM" id="MobiDB-lite"/>
    </source>
</evidence>
<evidence type="ECO:0000305" key="3"/>
<name>ESF2_ASPFU</name>
<gene>
    <name type="primary">esf2</name>
    <name type="ORF">AFUA_2G16760</name>
</gene>
<feature type="chain" id="PRO_0000285363" description="Pre-rRNA-processing protein esf2">
    <location>
        <begin position="1"/>
        <end position="361"/>
    </location>
</feature>
<feature type="domain" description="RRM">
    <location>
        <begin position="149"/>
        <end position="239"/>
    </location>
</feature>
<feature type="region of interest" description="Disordered" evidence="2">
    <location>
        <begin position="1"/>
        <end position="145"/>
    </location>
</feature>
<feature type="region of interest" description="Disordered" evidence="2">
    <location>
        <begin position="293"/>
        <end position="320"/>
    </location>
</feature>
<feature type="compositionally biased region" description="Basic and acidic residues" evidence="2">
    <location>
        <begin position="20"/>
        <end position="34"/>
    </location>
</feature>
<feature type="compositionally biased region" description="Basic and acidic residues" evidence="2">
    <location>
        <begin position="55"/>
        <end position="67"/>
    </location>
</feature>
<feature type="compositionally biased region" description="Acidic residues" evidence="2">
    <location>
        <begin position="84"/>
        <end position="94"/>
    </location>
</feature>
<feature type="compositionally biased region" description="Low complexity" evidence="2">
    <location>
        <begin position="111"/>
        <end position="129"/>
    </location>
</feature>
<comment type="function">
    <text evidence="1">Involved in the small subunit (SSU) processome assembly and function, and in the 18S rRNA synthesis. Required for the early cleavages at sites A0, A1 and A2 (By similarity).</text>
</comment>
<comment type="subcellular location">
    <subcellularLocation>
        <location evidence="1">Nucleus</location>
        <location evidence="1">Nucleolus</location>
    </subcellularLocation>
</comment>
<comment type="similarity">
    <text evidence="3">Belongs to the ESF2/ABP1 family.</text>
</comment>
<comment type="sequence caution" evidence="3">
    <conflict type="erroneous initiation">
        <sequence resource="EMBL-CDS" id="EAL93975"/>
    </conflict>
</comment>
<accession>Q4WZJ0</accession>
<dbReference type="EMBL" id="AAHF01000001">
    <property type="protein sequence ID" value="EAL93975.1"/>
    <property type="status" value="ALT_INIT"/>
    <property type="molecule type" value="Genomic_DNA"/>
</dbReference>
<dbReference type="RefSeq" id="XP_756013.1">
    <property type="nucleotide sequence ID" value="XM_750920.1"/>
</dbReference>
<dbReference type="FunCoup" id="Q4WZJ0">
    <property type="interactions" value="914"/>
</dbReference>
<dbReference type="STRING" id="330879.Q4WZJ0"/>
<dbReference type="GeneID" id="3513452"/>
<dbReference type="KEGG" id="afm:AFUA_2G16760"/>
<dbReference type="eggNOG" id="KOG3152">
    <property type="taxonomic scope" value="Eukaryota"/>
</dbReference>
<dbReference type="HOGENOM" id="CLU_054086_0_1_1"/>
<dbReference type="InParanoid" id="Q4WZJ0"/>
<dbReference type="OrthoDB" id="287393at2759"/>
<dbReference type="Proteomes" id="UP000002530">
    <property type="component" value="Chromosome 2"/>
</dbReference>
<dbReference type="GO" id="GO:0005730">
    <property type="term" value="C:nucleolus"/>
    <property type="evidence" value="ECO:0000318"/>
    <property type="project" value="GO_Central"/>
</dbReference>
<dbReference type="GO" id="GO:0003723">
    <property type="term" value="F:RNA binding"/>
    <property type="evidence" value="ECO:0000318"/>
    <property type="project" value="GO_Central"/>
</dbReference>
<dbReference type="GO" id="GO:0000480">
    <property type="term" value="P:endonucleolytic cleavage in 5'-ETS of tricistronic rRNA transcript (SSU-rRNA, 5.8S rRNA, LSU-rRNA)"/>
    <property type="evidence" value="ECO:0000318"/>
    <property type="project" value="GO_Central"/>
</dbReference>
<dbReference type="GO" id="GO:0000447">
    <property type="term" value="P:endonucleolytic cleavage in ITS1 to separate SSU-rRNA from 5.8S rRNA and LSU-rRNA from tricistronic rRNA transcript (SSU-rRNA, 5.8S rRNA, LSU-rRNA)"/>
    <property type="evidence" value="ECO:0000318"/>
    <property type="project" value="GO_Central"/>
</dbReference>
<dbReference type="GO" id="GO:0000472">
    <property type="term" value="P:endonucleolytic cleavage to generate mature 5'-end of SSU-rRNA from (SSU-rRNA, 5.8S rRNA, LSU-rRNA)"/>
    <property type="evidence" value="ECO:0000318"/>
    <property type="project" value="GO_Central"/>
</dbReference>
<dbReference type="GO" id="GO:0034462">
    <property type="term" value="P:small-subunit processome assembly"/>
    <property type="evidence" value="ECO:0000318"/>
    <property type="project" value="GO_Central"/>
</dbReference>
<dbReference type="CDD" id="cd12263">
    <property type="entry name" value="RRM_ABT1_like"/>
    <property type="match status" value="1"/>
</dbReference>
<dbReference type="FunFam" id="3.30.70.330:FF:001600">
    <property type="entry name" value="Pre-rRNA-processing protein esf2"/>
    <property type="match status" value="1"/>
</dbReference>
<dbReference type="Gene3D" id="3.30.70.330">
    <property type="match status" value="1"/>
</dbReference>
<dbReference type="InterPro" id="IPR039119">
    <property type="entry name" value="ABT1/Esf2"/>
</dbReference>
<dbReference type="InterPro" id="IPR034353">
    <property type="entry name" value="ABT1/ESF2_RRM"/>
</dbReference>
<dbReference type="InterPro" id="IPR012677">
    <property type="entry name" value="Nucleotide-bd_a/b_plait_sf"/>
</dbReference>
<dbReference type="InterPro" id="IPR035979">
    <property type="entry name" value="RBD_domain_sf"/>
</dbReference>
<dbReference type="PANTHER" id="PTHR12311">
    <property type="entry name" value="ACTIVATOR OF BASAL TRANSCRIPTION 1"/>
    <property type="match status" value="1"/>
</dbReference>
<dbReference type="PANTHER" id="PTHR12311:SF7">
    <property type="entry name" value="ACTIVATOR OF BASAL TRANSCRIPTION 1"/>
    <property type="match status" value="1"/>
</dbReference>
<dbReference type="SUPFAM" id="SSF54928">
    <property type="entry name" value="RNA-binding domain, RBD"/>
    <property type="match status" value="1"/>
</dbReference>
<protein>
    <recommendedName>
        <fullName>Pre-rRNA-processing protein esf2</fullName>
    </recommendedName>
    <alternativeName>
        <fullName>18S rRNA factor 2</fullName>
    </alternativeName>
</protein>
<sequence>MTTRKRNEFLDVVSDDDEGSDRAYDSEAAEESKGRLAKRRKTHTRADDLSDEESDIGRSESEDESKTRLKGKPKSKSQTTERSNDDDDEDEADDGEKMQVDQYLDATATLSPSQSRSQSPSTSSVTSKPTKLKKKPLDKVRPPKKNKTGVIYLSSLPPYLKPFALKSMLETRGFGPITKVFLTPEVPSNSAPRRRSNKRKSYADGWVEFASKKTAKICAETLNATIVGGKKGGWYHDDVWNMKYLKGFKWADLMEQVQRERSEREAKRRIEDTRARKEDKVFLQGVEQGKVLQGIQKKNEEKKKKKGETGTGEGSADAAANASELKVRRLFKQNEVKMGRDKVKDISALEDDAKRVLSKIF</sequence>
<reference key="1">
    <citation type="journal article" date="2005" name="Nature">
        <title>Genomic sequence of the pathogenic and allergenic filamentous fungus Aspergillus fumigatus.</title>
        <authorList>
            <person name="Nierman W.C."/>
            <person name="Pain A."/>
            <person name="Anderson M.J."/>
            <person name="Wortman J.R."/>
            <person name="Kim H.S."/>
            <person name="Arroyo J."/>
            <person name="Berriman M."/>
            <person name="Abe K."/>
            <person name="Archer D.B."/>
            <person name="Bermejo C."/>
            <person name="Bennett J.W."/>
            <person name="Bowyer P."/>
            <person name="Chen D."/>
            <person name="Collins M."/>
            <person name="Coulsen R."/>
            <person name="Davies R."/>
            <person name="Dyer P.S."/>
            <person name="Farman M.L."/>
            <person name="Fedorova N."/>
            <person name="Fedorova N.D."/>
            <person name="Feldblyum T.V."/>
            <person name="Fischer R."/>
            <person name="Fosker N."/>
            <person name="Fraser A."/>
            <person name="Garcia J.L."/>
            <person name="Garcia M.J."/>
            <person name="Goble A."/>
            <person name="Goldman G.H."/>
            <person name="Gomi K."/>
            <person name="Griffith-Jones S."/>
            <person name="Gwilliam R."/>
            <person name="Haas B.J."/>
            <person name="Haas H."/>
            <person name="Harris D.E."/>
            <person name="Horiuchi H."/>
            <person name="Huang J."/>
            <person name="Humphray S."/>
            <person name="Jimenez J."/>
            <person name="Keller N."/>
            <person name="Khouri H."/>
            <person name="Kitamoto K."/>
            <person name="Kobayashi T."/>
            <person name="Konzack S."/>
            <person name="Kulkarni R."/>
            <person name="Kumagai T."/>
            <person name="Lafton A."/>
            <person name="Latge J.-P."/>
            <person name="Li W."/>
            <person name="Lord A."/>
            <person name="Lu C."/>
            <person name="Majoros W.H."/>
            <person name="May G.S."/>
            <person name="Miller B.L."/>
            <person name="Mohamoud Y."/>
            <person name="Molina M."/>
            <person name="Monod M."/>
            <person name="Mouyna I."/>
            <person name="Mulligan S."/>
            <person name="Murphy L.D."/>
            <person name="O'Neil S."/>
            <person name="Paulsen I."/>
            <person name="Penalva M.A."/>
            <person name="Pertea M."/>
            <person name="Price C."/>
            <person name="Pritchard B.L."/>
            <person name="Quail M.A."/>
            <person name="Rabbinowitsch E."/>
            <person name="Rawlins N."/>
            <person name="Rajandream M.A."/>
            <person name="Reichard U."/>
            <person name="Renauld H."/>
            <person name="Robson G.D."/>
            <person name="Rodriguez de Cordoba S."/>
            <person name="Rodriguez-Pena J.M."/>
            <person name="Ronning C.M."/>
            <person name="Rutter S."/>
            <person name="Salzberg S.L."/>
            <person name="Sanchez M."/>
            <person name="Sanchez-Ferrero J.C."/>
            <person name="Saunders D."/>
            <person name="Seeger K."/>
            <person name="Squares R."/>
            <person name="Squares S."/>
            <person name="Takeuchi M."/>
            <person name="Tekaia F."/>
            <person name="Turner G."/>
            <person name="Vazquez de Aldana C.R."/>
            <person name="Weidman J."/>
            <person name="White O."/>
            <person name="Woodward J.R."/>
            <person name="Yu J.-H."/>
            <person name="Fraser C.M."/>
            <person name="Galagan J.E."/>
            <person name="Asai K."/>
            <person name="Machida M."/>
            <person name="Hall N."/>
            <person name="Barrell B.G."/>
            <person name="Denning D.W."/>
        </authorList>
    </citation>
    <scope>NUCLEOTIDE SEQUENCE [LARGE SCALE GENOMIC DNA]</scope>
    <source>
        <strain>ATCC MYA-4609 / CBS 101355 / FGSC A1100 / Af293</strain>
    </source>
</reference>